<dbReference type="EMBL" id="CU179680">
    <property type="protein sequence ID" value="CAL59293.1"/>
    <property type="molecule type" value="Genomic_DNA"/>
</dbReference>
<dbReference type="RefSeq" id="WP_011949751.1">
    <property type="nucleotide sequence ID" value="NC_009497.1"/>
</dbReference>
<dbReference type="SMR" id="A5IZ34"/>
<dbReference type="STRING" id="347257.MAG5930"/>
<dbReference type="GeneID" id="93358329"/>
<dbReference type="KEGG" id="maa:MAG5930"/>
<dbReference type="HOGENOM" id="CLU_072226_1_1_14"/>
<dbReference type="Proteomes" id="UP000007065">
    <property type="component" value="Chromosome"/>
</dbReference>
<dbReference type="GO" id="GO:0015935">
    <property type="term" value="C:small ribosomal subunit"/>
    <property type="evidence" value="ECO:0007669"/>
    <property type="project" value="InterPro"/>
</dbReference>
<dbReference type="GO" id="GO:0019843">
    <property type="term" value="F:rRNA binding"/>
    <property type="evidence" value="ECO:0007669"/>
    <property type="project" value="UniProtKB-UniRule"/>
</dbReference>
<dbReference type="GO" id="GO:0003735">
    <property type="term" value="F:structural constituent of ribosome"/>
    <property type="evidence" value="ECO:0007669"/>
    <property type="project" value="InterPro"/>
</dbReference>
<dbReference type="GO" id="GO:0000049">
    <property type="term" value="F:tRNA binding"/>
    <property type="evidence" value="ECO:0007669"/>
    <property type="project" value="UniProtKB-UniRule"/>
</dbReference>
<dbReference type="GO" id="GO:0006412">
    <property type="term" value="P:translation"/>
    <property type="evidence" value="ECO:0007669"/>
    <property type="project" value="UniProtKB-UniRule"/>
</dbReference>
<dbReference type="CDD" id="cd14869">
    <property type="entry name" value="uS7_Bacteria"/>
    <property type="match status" value="1"/>
</dbReference>
<dbReference type="FunFam" id="1.10.455.10:FF:000001">
    <property type="entry name" value="30S ribosomal protein S7"/>
    <property type="match status" value="1"/>
</dbReference>
<dbReference type="Gene3D" id="1.10.455.10">
    <property type="entry name" value="Ribosomal protein S7 domain"/>
    <property type="match status" value="1"/>
</dbReference>
<dbReference type="HAMAP" id="MF_00480_B">
    <property type="entry name" value="Ribosomal_uS7_B"/>
    <property type="match status" value="1"/>
</dbReference>
<dbReference type="InterPro" id="IPR000235">
    <property type="entry name" value="Ribosomal_uS7"/>
</dbReference>
<dbReference type="InterPro" id="IPR005717">
    <property type="entry name" value="Ribosomal_uS7_bac/org-type"/>
</dbReference>
<dbReference type="InterPro" id="IPR020606">
    <property type="entry name" value="Ribosomal_uS7_CS"/>
</dbReference>
<dbReference type="InterPro" id="IPR023798">
    <property type="entry name" value="Ribosomal_uS7_dom"/>
</dbReference>
<dbReference type="InterPro" id="IPR036823">
    <property type="entry name" value="Ribosomal_uS7_dom_sf"/>
</dbReference>
<dbReference type="NCBIfam" id="TIGR01029">
    <property type="entry name" value="rpsG_bact"/>
    <property type="match status" value="1"/>
</dbReference>
<dbReference type="PANTHER" id="PTHR11205">
    <property type="entry name" value="RIBOSOMAL PROTEIN S7"/>
    <property type="match status" value="1"/>
</dbReference>
<dbReference type="Pfam" id="PF00177">
    <property type="entry name" value="Ribosomal_S7"/>
    <property type="match status" value="1"/>
</dbReference>
<dbReference type="PIRSF" id="PIRSF002122">
    <property type="entry name" value="RPS7p_RPS7a_RPS5e_RPS7o"/>
    <property type="match status" value="1"/>
</dbReference>
<dbReference type="SUPFAM" id="SSF47973">
    <property type="entry name" value="Ribosomal protein S7"/>
    <property type="match status" value="1"/>
</dbReference>
<dbReference type="PROSITE" id="PS00052">
    <property type="entry name" value="RIBOSOMAL_S7"/>
    <property type="match status" value="1"/>
</dbReference>
<sequence>MSRKHSAPIRKVLADPVFNSVLVTKLINAIMLDGKKSLAQDILYSAFNLVKEKTQKDPMEVFQAAIDNVTPQLEVRTRRIGGTNYQVPTEVSARRKQTLALRWLVQYARLRNEKTMDVRLANEIIDASNKTGGAIKKREDTHKMAEANRAFAHFRW</sequence>
<evidence type="ECO:0000255" key="1">
    <source>
        <dbReference type="HAMAP-Rule" id="MF_00480"/>
    </source>
</evidence>
<evidence type="ECO:0000305" key="2"/>
<gene>
    <name evidence="1" type="primary">rpsG</name>
    <name type="ordered locus">MAG5930</name>
</gene>
<comment type="function">
    <text evidence="1">One of the primary rRNA binding proteins, it binds directly to 16S rRNA where it nucleates assembly of the head domain of the 30S subunit. Is located at the subunit interface close to the decoding center, probably blocks exit of the E-site tRNA.</text>
</comment>
<comment type="subunit">
    <text evidence="1">Part of the 30S ribosomal subunit. Contacts proteins S9 and S11.</text>
</comment>
<comment type="similarity">
    <text evidence="1">Belongs to the universal ribosomal protein uS7 family.</text>
</comment>
<feature type="chain" id="PRO_1000125972" description="Small ribosomal subunit protein uS7">
    <location>
        <begin position="1"/>
        <end position="156"/>
    </location>
</feature>
<accession>A5IZ34</accession>
<proteinExistence type="inferred from homology"/>
<keyword id="KW-1185">Reference proteome</keyword>
<keyword id="KW-0687">Ribonucleoprotein</keyword>
<keyword id="KW-0689">Ribosomal protein</keyword>
<keyword id="KW-0694">RNA-binding</keyword>
<keyword id="KW-0699">rRNA-binding</keyword>
<keyword id="KW-0820">tRNA-binding</keyword>
<protein>
    <recommendedName>
        <fullName evidence="1">Small ribosomal subunit protein uS7</fullName>
    </recommendedName>
    <alternativeName>
        <fullName evidence="2">30S ribosomal protein S7</fullName>
    </alternativeName>
</protein>
<name>RS7_MYCAP</name>
<reference key="1">
    <citation type="journal article" date="2007" name="PLoS Genet.">
        <title>Being pathogenic, plastic, and sexual while living with a nearly minimal bacterial genome.</title>
        <authorList>
            <person name="Sirand-Pugnet P."/>
            <person name="Lartigue C."/>
            <person name="Marenda M."/>
            <person name="Jacob D."/>
            <person name="Barre A."/>
            <person name="Barbe V."/>
            <person name="Schenowitz C."/>
            <person name="Mangenot S."/>
            <person name="Couloux A."/>
            <person name="Segurens B."/>
            <person name="de Daruvar A."/>
            <person name="Blanchard A."/>
            <person name="Citti C."/>
        </authorList>
    </citation>
    <scope>NUCLEOTIDE SEQUENCE [LARGE SCALE GENOMIC DNA]</scope>
    <source>
        <strain>NCTC 10123 / CIP 59.7 / PG2</strain>
    </source>
</reference>
<organism>
    <name type="scientific">Mycoplasmopsis agalactiae (strain NCTC 10123 / CIP 59.7 / PG2)</name>
    <name type="common">Mycoplasma agalactiae</name>
    <dbReference type="NCBI Taxonomy" id="347257"/>
    <lineage>
        <taxon>Bacteria</taxon>
        <taxon>Bacillati</taxon>
        <taxon>Mycoplasmatota</taxon>
        <taxon>Mycoplasmoidales</taxon>
        <taxon>Metamycoplasmataceae</taxon>
        <taxon>Mycoplasmopsis</taxon>
    </lineage>
</organism>